<name>PSBF_RIPO1</name>
<dbReference type="EMBL" id="CP001287">
    <property type="protein sequence ID" value="ACK68078.1"/>
    <property type="molecule type" value="Genomic_DNA"/>
</dbReference>
<dbReference type="RefSeq" id="WP_015785129.1">
    <property type="nucleotide sequence ID" value="NC_011726.1"/>
</dbReference>
<dbReference type="SMR" id="B7K625"/>
<dbReference type="STRING" id="41431.PCC8801_4146"/>
<dbReference type="KEGG" id="cyp:PCC8801_4146"/>
<dbReference type="eggNOG" id="ENOG50332KX">
    <property type="taxonomic scope" value="Bacteria"/>
</dbReference>
<dbReference type="HOGENOM" id="CLU_211753_1_0_3"/>
<dbReference type="OrthoDB" id="532613at2"/>
<dbReference type="Proteomes" id="UP000008204">
    <property type="component" value="Chromosome"/>
</dbReference>
<dbReference type="GO" id="GO:0009539">
    <property type="term" value="C:photosystem II reaction center"/>
    <property type="evidence" value="ECO:0007669"/>
    <property type="project" value="InterPro"/>
</dbReference>
<dbReference type="GO" id="GO:0031676">
    <property type="term" value="C:plasma membrane-derived thylakoid membrane"/>
    <property type="evidence" value="ECO:0007669"/>
    <property type="project" value="UniProtKB-SubCell"/>
</dbReference>
<dbReference type="GO" id="GO:0009055">
    <property type="term" value="F:electron transfer activity"/>
    <property type="evidence" value="ECO:0007669"/>
    <property type="project" value="UniProtKB-UniRule"/>
</dbReference>
<dbReference type="GO" id="GO:0020037">
    <property type="term" value="F:heme binding"/>
    <property type="evidence" value="ECO:0007669"/>
    <property type="project" value="InterPro"/>
</dbReference>
<dbReference type="GO" id="GO:0005506">
    <property type="term" value="F:iron ion binding"/>
    <property type="evidence" value="ECO:0007669"/>
    <property type="project" value="UniProtKB-UniRule"/>
</dbReference>
<dbReference type="GO" id="GO:0009767">
    <property type="term" value="P:photosynthetic electron transport chain"/>
    <property type="evidence" value="ECO:0007669"/>
    <property type="project" value="InterPro"/>
</dbReference>
<dbReference type="HAMAP" id="MF_00643">
    <property type="entry name" value="PSII_PsbF"/>
    <property type="match status" value="1"/>
</dbReference>
<dbReference type="InterPro" id="IPR006241">
    <property type="entry name" value="PSII_cyt_b559_bsu"/>
</dbReference>
<dbReference type="InterPro" id="IPR006216">
    <property type="entry name" value="PSII_cyt_b559_CS"/>
</dbReference>
<dbReference type="InterPro" id="IPR013081">
    <property type="entry name" value="PSII_cyt_b559_N"/>
</dbReference>
<dbReference type="NCBIfam" id="TIGR01333">
    <property type="entry name" value="cyt_b559_beta"/>
    <property type="match status" value="1"/>
</dbReference>
<dbReference type="Pfam" id="PF00283">
    <property type="entry name" value="Cytochrom_B559"/>
    <property type="match status" value="1"/>
</dbReference>
<dbReference type="PIRSF" id="PIRSF000037">
    <property type="entry name" value="PsbF"/>
    <property type="match status" value="1"/>
</dbReference>
<dbReference type="SUPFAM" id="SSF161045">
    <property type="entry name" value="Cytochrome b559 subunits"/>
    <property type="match status" value="1"/>
</dbReference>
<dbReference type="PROSITE" id="PS00537">
    <property type="entry name" value="CYTOCHROME_B559"/>
    <property type="match status" value="1"/>
</dbReference>
<gene>
    <name evidence="1" type="primary">psbF</name>
    <name type="ordered locus">PCC8801_4146</name>
</gene>
<feature type="chain" id="PRO_1000130904" description="Cytochrome b559 subunit beta">
    <location>
        <begin position="1"/>
        <end position="44"/>
    </location>
</feature>
<feature type="transmembrane region" description="Helical" evidence="1">
    <location>
        <begin position="19"/>
        <end position="35"/>
    </location>
</feature>
<feature type="binding site" description="axial binding residue" evidence="1">
    <location>
        <position position="23"/>
    </location>
    <ligand>
        <name>heme</name>
        <dbReference type="ChEBI" id="CHEBI:30413"/>
        <note>ligand shared with alpha subunit</note>
    </ligand>
    <ligandPart>
        <name>Fe</name>
        <dbReference type="ChEBI" id="CHEBI:18248"/>
    </ligandPart>
</feature>
<keyword id="KW-0249">Electron transport</keyword>
<keyword id="KW-0349">Heme</keyword>
<keyword id="KW-0408">Iron</keyword>
<keyword id="KW-0472">Membrane</keyword>
<keyword id="KW-0479">Metal-binding</keyword>
<keyword id="KW-0602">Photosynthesis</keyword>
<keyword id="KW-0604">Photosystem II</keyword>
<keyword id="KW-1185">Reference proteome</keyword>
<keyword id="KW-0793">Thylakoid</keyword>
<keyword id="KW-0812">Transmembrane</keyword>
<keyword id="KW-1133">Transmembrane helix</keyword>
<keyword id="KW-0813">Transport</keyword>
<organism>
    <name type="scientific">Rippkaea orientalis (strain PCC 8801 / RF-1)</name>
    <name type="common">Cyanothece sp. (strain PCC 8801)</name>
    <dbReference type="NCBI Taxonomy" id="41431"/>
    <lineage>
        <taxon>Bacteria</taxon>
        <taxon>Bacillati</taxon>
        <taxon>Cyanobacteriota</taxon>
        <taxon>Cyanophyceae</taxon>
        <taxon>Oscillatoriophycideae</taxon>
        <taxon>Chroococcales</taxon>
        <taxon>Aphanothecaceae</taxon>
        <taxon>Rippkaea</taxon>
        <taxon>Rippkaea orientalis</taxon>
    </lineage>
</organism>
<comment type="function">
    <text evidence="1">This b-type cytochrome is tightly associated with the reaction center of photosystem II (PSII). PSII is a light-driven water:plastoquinone oxidoreductase that uses light energy to abstract electrons from H(2)O, generating O(2) and a proton gradient subsequently used for ATP formation. It consists of a core antenna complex that captures photons, and an electron transfer chain that converts photonic excitation into a charge separation.</text>
</comment>
<comment type="cofactor">
    <cofactor evidence="1">
        <name>heme b</name>
        <dbReference type="ChEBI" id="CHEBI:60344"/>
    </cofactor>
    <text evidence="1">With its partner (PsbE) binds heme. PSII binds additional chlorophylls, carotenoids and specific lipids.</text>
</comment>
<comment type="subunit">
    <text evidence="1">Heterodimer of an alpha subunit and a beta subunit. PSII is composed of 1 copy each of membrane proteins PsbA, PsbB, PsbC, PsbD, PsbE, PsbF, PsbH, PsbI, PsbJ, PsbK, PsbL, PsbM, PsbT, PsbX, PsbY, PsbZ, Psb30/Ycf12, peripheral proteins PsbO, CyanoQ (PsbQ), PsbU, PsbV and a large number of cofactors. It forms dimeric complexes.</text>
</comment>
<comment type="subcellular location">
    <subcellularLocation>
        <location evidence="1">Cellular thylakoid membrane</location>
        <topology evidence="1">Single-pass membrane protein</topology>
    </subcellularLocation>
</comment>
<comment type="similarity">
    <text evidence="1">Belongs to the PsbE/PsbF family.</text>
</comment>
<sequence length="44" mass="4951">MTSNNPNQPVSYPIFTVRWLSVHALAVPTVFFIGAISAMQFIQR</sequence>
<accession>B7K625</accession>
<reference key="1">
    <citation type="journal article" date="2011" name="MBio">
        <title>Novel metabolic attributes of the genus Cyanothece, comprising a group of unicellular nitrogen-fixing Cyanobacteria.</title>
        <authorList>
            <person name="Bandyopadhyay A."/>
            <person name="Elvitigala T."/>
            <person name="Welsh E."/>
            <person name="Stockel J."/>
            <person name="Liberton M."/>
            <person name="Min H."/>
            <person name="Sherman L.A."/>
            <person name="Pakrasi H.B."/>
        </authorList>
    </citation>
    <scope>NUCLEOTIDE SEQUENCE [LARGE SCALE GENOMIC DNA]</scope>
    <source>
        <strain>PCC 8801 / RF-1</strain>
    </source>
</reference>
<protein>
    <recommendedName>
        <fullName evidence="1">Cytochrome b559 subunit beta</fullName>
    </recommendedName>
    <alternativeName>
        <fullName evidence="1">PSII reaction center subunit VI</fullName>
    </alternativeName>
</protein>
<proteinExistence type="inferred from homology"/>
<evidence type="ECO:0000255" key="1">
    <source>
        <dbReference type="HAMAP-Rule" id="MF_00643"/>
    </source>
</evidence>